<gene>
    <name evidence="1" type="primary">ppnP</name>
    <name type="ordered locus">VPA0057</name>
</gene>
<protein>
    <recommendedName>
        <fullName evidence="1">Pyrimidine/purine nucleoside phosphorylase</fullName>
        <ecNumber evidence="1">2.4.2.1</ecNumber>
        <ecNumber evidence="1">2.4.2.2</ecNumber>
    </recommendedName>
    <alternativeName>
        <fullName evidence="1">Adenosine phosphorylase</fullName>
    </alternativeName>
    <alternativeName>
        <fullName evidence="1">Cytidine phosphorylase</fullName>
    </alternativeName>
    <alternativeName>
        <fullName evidence="1">Guanosine phosphorylase</fullName>
    </alternativeName>
    <alternativeName>
        <fullName evidence="1">Inosine phosphorylase</fullName>
    </alternativeName>
    <alternativeName>
        <fullName evidence="1">Thymidine phosphorylase</fullName>
    </alternativeName>
    <alternativeName>
        <fullName evidence="1">Uridine phosphorylase</fullName>
    </alternativeName>
    <alternativeName>
        <fullName evidence="1">Xanthosine phosphorylase</fullName>
    </alternativeName>
</protein>
<reference key="1">
    <citation type="journal article" date="2003" name="Lancet">
        <title>Genome sequence of Vibrio parahaemolyticus: a pathogenic mechanism distinct from that of V. cholerae.</title>
        <authorList>
            <person name="Makino K."/>
            <person name="Oshima K."/>
            <person name="Kurokawa K."/>
            <person name="Yokoyama K."/>
            <person name="Uda T."/>
            <person name="Tagomori K."/>
            <person name="Iijima Y."/>
            <person name="Najima M."/>
            <person name="Nakano M."/>
            <person name="Yamashita A."/>
            <person name="Kubota Y."/>
            <person name="Kimura S."/>
            <person name="Yasunaga T."/>
            <person name="Honda T."/>
            <person name="Shinagawa H."/>
            <person name="Hattori M."/>
            <person name="Iida T."/>
        </authorList>
    </citation>
    <scope>NUCLEOTIDE SEQUENCE [LARGE SCALE GENOMIC DNA]</scope>
    <source>
        <strain>RIMD 2210633</strain>
    </source>
</reference>
<feature type="chain" id="PRO_0000211786" description="Pyrimidine/purine nucleoside phosphorylase">
    <location>
        <begin position="1"/>
        <end position="94"/>
    </location>
</feature>
<feature type="strand" evidence="2">
    <location>
        <begin position="4"/>
        <end position="8"/>
    </location>
</feature>
<feature type="helix" evidence="2">
    <location>
        <begin position="9"/>
        <end position="11"/>
    </location>
</feature>
<feature type="strand" evidence="2">
    <location>
        <begin position="13"/>
        <end position="20"/>
    </location>
</feature>
<feature type="strand" evidence="2">
    <location>
        <begin position="23"/>
        <end position="30"/>
    </location>
</feature>
<feature type="strand" evidence="2">
    <location>
        <begin position="32"/>
        <end position="41"/>
    </location>
</feature>
<feature type="strand" evidence="2">
    <location>
        <begin position="43"/>
        <end position="56"/>
    </location>
</feature>
<feature type="strand" evidence="2">
    <location>
        <begin position="63"/>
        <end position="66"/>
    </location>
</feature>
<feature type="strand" evidence="2">
    <location>
        <begin position="70"/>
        <end position="73"/>
    </location>
</feature>
<feature type="strand" evidence="2">
    <location>
        <begin position="75"/>
        <end position="85"/>
    </location>
</feature>
<feature type="strand" evidence="2">
    <location>
        <begin position="87"/>
        <end position="92"/>
    </location>
</feature>
<sequence length="94" mass="10212">MSIKENSYFAGGVKSLGFNQHGQDVSVGVMLPGEYTFGTQAPERMTVVKGALVVKRVGEADWTTYSSGESFDVEGNSSFELQVKDATAYLCEYL</sequence>
<organism>
    <name type="scientific">Vibrio parahaemolyticus serotype O3:K6 (strain RIMD 2210633)</name>
    <dbReference type="NCBI Taxonomy" id="223926"/>
    <lineage>
        <taxon>Bacteria</taxon>
        <taxon>Pseudomonadati</taxon>
        <taxon>Pseudomonadota</taxon>
        <taxon>Gammaproteobacteria</taxon>
        <taxon>Vibrionales</taxon>
        <taxon>Vibrionaceae</taxon>
        <taxon>Vibrio</taxon>
    </lineage>
</organism>
<proteinExistence type="evidence at protein level"/>
<accession>Q87K41</accession>
<keyword id="KW-0002">3D-structure</keyword>
<keyword id="KW-0328">Glycosyltransferase</keyword>
<keyword id="KW-0808">Transferase</keyword>
<comment type="function">
    <text evidence="1">Catalyzes the phosphorolysis of diverse nucleosides, yielding D-ribose 1-phosphate and the respective free bases. Can use uridine, adenosine, guanosine, cytidine, thymidine, inosine and xanthosine as substrates. Also catalyzes the reverse reactions.</text>
</comment>
<comment type="catalytic activity">
    <reaction evidence="1">
        <text>a purine D-ribonucleoside + phosphate = a purine nucleobase + alpha-D-ribose 1-phosphate</text>
        <dbReference type="Rhea" id="RHEA:19805"/>
        <dbReference type="ChEBI" id="CHEBI:26386"/>
        <dbReference type="ChEBI" id="CHEBI:43474"/>
        <dbReference type="ChEBI" id="CHEBI:57720"/>
        <dbReference type="ChEBI" id="CHEBI:142355"/>
        <dbReference type="EC" id="2.4.2.1"/>
    </reaction>
</comment>
<comment type="catalytic activity">
    <reaction evidence="1">
        <text>adenosine + phosphate = alpha-D-ribose 1-phosphate + adenine</text>
        <dbReference type="Rhea" id="RHEA:27642"/>
        <dbReference type="ChEBI" id="CHEBI:16335"/>
        <dbReference type="ChEBI" id="CHEBI:16708"/>
        <dbReference type="ChEBI" id="CHEBI:43474"/>
        <dbReference type="ChEBI" id="CHEBI:57720"/>
        <dbReference type="EC" id="2.4.2.1"/>
    </reaction>
</comment>
<comment type="catalytic activity">
    <reaction evidence="1">
        <text>cytidine + phosphate = cytosine + alpha-D-ribose 1-phosphate</text>
        <dbReference type="Rhea" id="RHEA:52540"/>
        <dbReference type="ChEBI" id="CHEBI:16040"/>
        <dbReference type="ChEBI" id="CHEBI:17562"/>
        <dbReference type="ChEBI" id="CHEBI:43474"/>
        <dbReference type="ChEBI" id="CHEBI:57720"/>
        <dbReference type="EC" id="2.4.2.2"/>
    </reaction>
</comment>
<comment type="catalytic activity">
    <reaction evidence="1">
        <text>guanosine + phosphate = alpha-D-ribose 1-phosphate + guanine</text>
        <dbReference type="Rhea" id="RHEA:13233"/>
        <dbReference type="ChEBI" id="CHEBI:16235"/>
        <dbReference type="ChEBI" id="CHEBI:16750"/>
        <dbReference type="ChEBI" id="CHEBI:43474"/>
        <dbReference type="ChEBI" id="CHEBI:57720"/>
        <dbReference type="EC" id="2.4.2.1"/>
    </reaction>
</comment>
<comment type="catalytic activity">
    <reaction evidence="1">
        <text>inosine + phosphate = alpha-D-ribose 1-phosphate + hypoxanthine</text>
        <dbReference type="Rhea" id="RHEA:27646"/>
        <dbReference type="ChEBI" id="CHEBI:17368"/>
        <dbReference type="ChEBI" id="CHEBI:17596"/>
        <dbReference type="ChEBI" id="CHEBI:43474"/>
        <dbReference type="ChEBI" id="CHEBI:57720"/>
        <dbReference type="EC" id="2.4.2.1"/>
    </reaction>
</comment>
<comment type="catalytic activity">
    <reaction evidence="1">
        <text>thymidine + phosphate = 2-deoxy-alpha-D-ribose 1-phosphate + thymine</text>
        <dbReference type="Rhea" id="RHEA:16037"/>
        <dbReference type="ChEBI" id="CHEBI:17748"/>
        <dbReference type="ChEBI" id="CHEBI:17821"/>
        <dbReference type="ChEBI" id="CHEBI:43474"/>
        <dbReference type="ChEBI" id="CHEBI:57259"/>
        <dbReference type="EC" id="2.4.2.2"/>
    </reaction>
</comment>
<comment type="catalytic activity">
    <reaction evidence="1">
        <text>uridine + phosphate = alpha-D-ribose 1-phosphate + uracil</text>
        <dbReference type="Rhea" id="RHEA:24388"/>
        <dbReference type="ChEBI" id="CHEBI:16704"/>
        <dbReference type="ChEBI" id="CHEBI:17568"/>
        <dbReference type="ChEBI" id="CHEBI:43474"/>
        <dbReference type="ChEBI" id="CHEBI:57720"/>
        <dbReference type="EC" id="2.4.2.2"/>
    </reaction>
</comment>
<comment type="catalytic activity">
    <reaction evidence="1">
        <text>xanthosine + phosphate = alpha-D-ribose 1-phosphate + xanthine</text>
        <dbReference type="Rhea" id="RHEA:27638"/>
        <dbReference type="ChEBI" id="CHEBI:17712"/>
        <dbReference type="ChEBI" id="CHEBI:18107"/>
        <dbReference type="ChEBI" id="CHEBI:43474"/>
        <dbReference type="ChEBI" id="CHEBI:57720"/>
        <dbReference type="EC" id="2.4.2.1"/>
    </reaction>
</comment>
<comment type="similarity">
    <text evidence="1">Belongs to the nucleoside phosphorylase PpnP family.</text>
</comment>
<evidence type="ECO:0000255" key="1">
    <source>
        <dbReference type="HAMAP-Rule" id="MF_01537"/>
    </source>
</evidence>
<evidence type="ECO:0007829" key="2">
    <source>
        <dbReference type="PDB" id="2OYZ"/>
    </source>
</evidence>
<name>PPNP_VIBPA</name>
<dbReference type="EC" id="2.4.2.1" evidence="1"/>
<dbReference type="EC" id="2.4.2.2" evidence="1"/>
<dbReference type="EMBL" id="BA000032">
    <property type="protein sequence ID" value="BAC61400.1"/>
    <property type="molecule type" value="Genomic_DNA"/>
</dbReference>
<dbReference type="RefSeq" id="NP_799567.1">
    <property type="nucleotide sequence ID" value="NC_004605.1"/>
</dbReference>
<dbReference type="RefSeq" id="WP_005464991.1">
    <property type="nucleotide sequence ID" value="NC_004605.1"/>
</dbReference>
<dbReference type="PDB" id="2OYZ">
    <property type="method" value="X-ray"/>
    <property type="resolution" value="1.71 A"/>
    <property type="chains" value="A=2-94"/>
</dbReference>
<dbReference type="PDBsum" id="2OYZ"/>
<dbReference type="SMR" id="Q87K41"/>
<dbReference type="GeneID" id="1190736"/>
<dbReference type="KEGG" id="vpa:VPA0057"/>
<dbReference type="PATRIC" id="fig|223926.6.peg.3017"/>
<dbReference type="eggNOG" id="COG3123">
    <property type="taxonomic scope" value="Bacteria"/>
</dbReference>
<dbReference type="HOGENOM" id="CLU_157874_0_0_6"/>
<dbReference type="EvolutionaryTrace" id="Q87K41"/>
<dbReference type="Proteomes" id="UP000002493">
    <property type="component" value="Chromosome 2"/>
</dbReference>
<dbReference type="GO" id="GO:0005829">
    <property type="term" value="C:cytosol"/>
    <property type="evidence" value="ECO:0007669"/>
    <property type="project" value="TreeGrafter"/>
</dbReference>
<dbReference type="GO" id="GO:0047975">
    <property type="term" value="F:guanosine phosphorylase activity"/>
    <property type="evidence" value="ECO:0007669"/>
    <property type="project" value="UniProtKB-EC"/>
</dbReference>
<dbReference type="GO" id="GO:0004731">
    <property type="term" value="F:purine-nucleoside phosphorylase activity"/>
    <property type="evidence" value="ECO:0007669"/>
    <property type="project" value="UniProtKB-UniRule"/>
</dbReference>
<dbReference type="GO" id="GO:0009032">
    <property type="term" value="F:thymidine phosphorylase activity"/>
    <property type="evidence" value="ECO:0007669"/>
    <property type="project" value="UniProtKB-EC"/>
</dbReference>
<dbReference type="GO" id="GO:0004850">
    <property type="term" value="F:uridine phosphorylase activity"/>
    <property type="evidence" value="ECO:0007669"/>
    <property type="project" value="UniProtKB-EC"/>
</dbReference>
<dbReference type="CDD" id="cd20296">
    <property type="entry name" value="cupin_PpnP-like"/>
    <property type="match status" value="1"/>
</dbReference>
<dbReference type="FunFam" id="2.60.120.10:FF:000016">
    <property type="entry name" value="Pyrimidine/purine nucleoside phosphorylase"/>
    <property type="match status" value="1"/>
</dbReference>
<dbReference type="Gene3D" id="2.60.120.10">
    <property type="entry name" value="Jelly Rolls"/>
    <property type="match status" value="1"/>
</dbReference>
<dbReference type="HAMAP" id="MF_01537">
    <property type="entry name" value="Nucleos_phosphorylase_PpnP"/>
    <property type="match status" value="1"/>
</dbReference>
<dbReference type="InterPro" id="IPR009664">
    <property type="entry name" value="Ppnp"/>
</dbReference>
<dbReference type="InterPro" id="IPR014710">
    <property type="entry name" value="RmlC-like_jellyroll"/>
</dbReference>
<dbReference type="InterPro" id="IPR011051">
    <property type="entry name" value="RmlC_Cupin_sf"/>
</dbReference>
<dbReference type="PANTHER" id="PTHR36540">
    <property type="entry name" value="PYRIMIDINE/PURINE NUCLEOSIDE PHOSPHORYLASE"/>
    <property type="match status" value="1"/>
</dbReference>
<dbReference type="PANTHER" id="PTHR36540:SF1">
    <property type="entry name" value="PYRIMIDINE_PURINE NUCLEOSIDE PHOSPHORYLASE"/>
    <property type="match status" value="1"/>
</dbReference>
<dbReference type="Pfam" id="PF06865">
    <property type="entry name" value="Ppnp"/>
    <property type="match status" value="1"/>
</dbReference>
<dbReference type="SUPFAM" id="SSF51182">
    <property type="entry name" value="RmlC-like cupins"/>
    <property type="match status" value="1"/>
</dbReference>